<organism>
    <name type="scientific">Brucella melitensis biotype 1 (strain ATCC 23456 / CCUG 17765 / NCTC 10094 / 16M)</name>
    <dbReference type="NCBI Taxonomy" id="224914"/>
    <lineage>
        <taxon>Bacteria</taxon>
        <taxon>Pseudomonadati</taxon>
        <taxon>Pseudomonadota</taxon>
        <taxon>Alphaproteobacteria</taxon>
        <taxon>Hyphomicrobiales</taxon>
        <taxon>Brucellaceae</taxon>
        <taxon>Brucella/Ochrobactrum group</taxon>
        <taxon>Brucella</taxon>
    </lineage>
</organism>
<keyword id="KW-0067">ATP-binding</keyword>
<keyword id="KW-0997">Cell inner membrane</keyword>
<keyword id="KW-1003">Cell membrane</keyword>
<keyword id="KW-0472">Membrane</keyword>
<keyword id="KW-0547">Nucleotide-binding</keyword>
<keyword id="KW-0762">Sugar transport</keyword>
<keyword id="KW-1278">Translocase</keyword>
<keyword id="KW-0812">Transmembrane</keyword>
<keyword id="KW-1133">Transmembrane helix</keyword>
<keyword id="KW-0813">Transport</keyword>
<evidence type="ECO:0000250" key="1"/>
<evidence type="ECO:0000255" key="2">
    <source>
        <dbReference type="HAMAP-Rule" id="MF_01728"/>
    </source>
</evidence>
<sequence length="599" mass="65992">MSLLKIYWRAMQYLAVERTATITMCVASVLVALVTLAEPVLFGRVIQSISDKGDIFSPLLMWAALGGFNIMAAVFVARGADRLAHRRRLGVMIDSYERLITMPLAWHQKRGTSNALHTLIRATDSLFTLWLEFMRQHLTTVVALATLIPVAMTMDMRMSLVLIVLGVIYVMIGQLVMRKTKDGQAAVEKHHHKLFEHVSDTISNVSVVQSYNRIASETQALRDYAKNLENAQFPVLNWWALASGLNRMASTFSMVVVLVLGAYFVTKGQMRVGDVIAFIGFAQLMIGRLDQISAFINQTVTARAKLEEFFQMEDATADRQEPENVADLNDVKGDIVFDNVTYEFPNSGQGVYDVSFEVKPGQTVAIVGPTGAGKTTLINLLQRVFDPAAGRIMIDGTDTRTVSRRSLRHAIATVFQDAGLFNRSVEDNIRVGRANATHEEVHAAAKAAAAHDFILAKSEGYDTFVGERGSQLSGGERQRLAIARAILKDSPILVLDEATSALDVETEEKLKQAVDELSHNRTTFIIAHRLSTVRSADLVLFMDKGHLVESGSFNELAERGGRFSDLLRAGGLKLEDKQPKQPVVEGSNVMPFPVKGAVA</sequence>
<name>NDVA_BRUME</name>
<protein>
    <recommendedName>
        <fullName evidence="2">Beta-(1--&gt;2)glucan export ATP-binding/permease protein NdvA</fullName>
        <ecNumber evidence="2">7.5.2.3</ecNumber>
    </recommendedName>
</protein>
<dbReference type="EC" id="7.5.2.3" evidence="2"/>
<dbReference type="EMBL" id="AE008917">
    <property type="protein sequence ID" value="AAL52165.1"/>
    <property type="molecule type" value="Genomic_DNA"/>
</dbReference>
<dbReference type="PIR" id="AB3375">
    <property type="entry name" value="AB3375"/>
</dbReference>
<dbReference type="SMR" id="Q8YH20"/>
<dbReference type="KEGG" id="bme:BMEI0984"/>
<dbReference type="KEGG" id="bmel:DK63_437"/>
<dbReference type="PATRIC" id="fig|224914.52.peg.455"/>
<dbReference type="eggNOG" id="COG1132">
    <property type="taxonomic scope" value="Bacteria"/>
</dbReference>
<dbReference type="Proteomes" id="UP000000419">
    <property type="component" value="Chromosome I"/>
</dbReference>
<dbReference type="GO" id="GO:0005886">
    <property type="term" value="C:plasma membrane"/>
    <property type="evidence" value="ECO:0007669"/>
    <property type="project" value="UniProtKB-SubCell"/>
</dbReference>
<dbReference type="GO" id="GO:0015441">
    <property type="term" value="F:ABC-type beta-glucan transporter activity"/>
    <property type="evidence" value="ECO:0007669"/>
    <property type="project" value="UniProtKB-EC"/>
</dbReference>
<dbReference type="GO" id="GO:0005524">
    <property type="term" value="F:ATP binding"/>
    <property type="evidence" value="ECO:0007669"/>
    <property type="project" value="UniProtKB-KW"/>
</dbReference>
<dbReference type="GO" id="GO:0016887">
    <property type="term" value="F:ATP hydrolysis activity"/>
    <property type="evidence" value="ECO:0007669"/>
    <property type="project" value="InterPro"/>
</dbReference>
<dbReference type="GO" id="GO:0034040">
    <property type="term" value="F:ATPase-coupled lipid transmembrane transporter activity"/>
    <property type="evidence" value="ECO:0007669"/>
    <property type="project" value="TreeGrafter"/>
</dbReference>
<dbReference type="CDD" id="cd18562">
    <property type="entry name" value="ABC_6TM_NdvA_beta-glucan_exporter_like"/>
    <property type="match status" value="1"/>
</dbReference>
<dbReference type="FunFam" id="1.20.1560.10:FF:000182">
    <property type="entry name" value="Beta-(1--&gt;2)glucan export ATP-binding/permease protein NdvA"/>
    <property type="match status" value="1"/>
</dbReference>
<dbReference type="FunFam" id="3.40.50.300:FF:000221">
    <property type="entry name" value="Multidrug ABC transporter ATP-binding protein"/>
    <property type="match status" value="1"/>
</dbReference>
<dbReference type="Gene3D" id="1.20.1560.10">
    <property type="entry name" value="ABC transporter type 1, transmembrane domain"/>
    <property type="match status" value="1"/>
</dbReference>
<dbReference type="Gene3D" id="3.40.50.300">
    <property type="entry name" value="P-loop containing nucleotide triphosphate hydrolases"/>
    <property type="match status" value="1"/>
</dbReference>
<dbReference type="InterPro" id="IPR003593">
    <property type="entry name" value="AAA+_ATPase"/>
</dbReference>
<dbReference type="InterPro" id="IPR011527">
    <property type="entry name" value="ABC1_TM_dom"/>
</dbReference>
<dbReference type="InterPro" id="IPR036640">
    <property type="entry name" value="ABC1_TM_sf"/>
</dbReference>
<dbReference type="InterPro" id="IPR003439">
    <property type="entry name" value="ABC_transporter-like_ATP-bd"/>
</dbReference>
<dbReference type="InterPro" id="IPR017871">
    <property type="entry name" value="ABC_transporter-like_CS"/>
</dbReference>
<dbReference type="InterPro" id="IPR005896">
    <property type="entry name" value="NdvA"/>
</dbReference>
<dbReference type="InterPro" id="IPR027417">
    <property type="entry name" value="P-loop_NTPase"/>
</dbReference>
<dbReference type="InterPro" id="IPR039421">
    <property type="entry name" value="Type_1_exporter"/>
</dbReference>
<dbReference type="NCBIfam" id="TIGR01192">
    <property type="entry name" value="chvA"/>
    <property type="match status" value="1"/>
</dbReference>
<dbReference type="NCBIfam" id="NF010178">
    <property type="entry name" value="PRK13657.1"/>
    <property type="match status" value="1"/>
</dbReference>
<dbReference type="PANTHER" id="PTHR24221">
    <property type="entry name" value="ATP-BINDING CASSETTE SUB-FAMILY B"/>
    <property type="match status" value="1"/>
</dbReference>
<dbReference type="PANTHER" id="PTHR24221:SF654">
    <property type="entry name" value="ATP-BINDING CASSETTE SUB-FAMILY B MEMBER 6"/>
    <property type="match status" value="1"/>
</dbReference>
<dbReference type="Pfam" id="PF00664">
    <property type="entry name" value="ABC_membrane"/>
    <property type="match status" value="1"/>
</dbReference>
<dbReference type="Pfam" id="PF00005">
    <property type="entry name" value="ABC_tran"/>
    <property type="match status" value="1"/>
</dbReference>
<dbReference type="SMART" id="SM00382">
    <property type="entry name" value="AAA"/>
    <property type="match status" value="1"/>
</dbReference>
<dbReference type="SUPFAM" id="SSF90123">
    <property type="entry name" value="ABC transporter transmembrane region"/>
    <property type="match status" value="1"/>
</dbReference>
<dbReference type="SUPFAM" id="SSF52540">
    <property type="entry name" value="P-loop containing nucleoside triphosphate hydrolases"/>
    <property type="match status" value="1"/>
</dbReference>
<dbReference type="PROSITE" id="PS50929">
    <property type="entry name" value="ABC_TM1F"/>
    <property type="match status" value="1"/>
</dbReference>
<dbReference type="PROSITE" id="PS00211">
    <property type="entry name" value="ABC_TRANSPORTER_1"/>
    <property type="match status" value="1"/>
</dbReference>
<dbReference type="PROSITE" id="PS50893">
    <property type="entry name" value="ABC_TRANSPORTER_2"/>
    <property type="match status" value="1"/>
</dbReference>
<dbReference type="PROSITE" id="PS51317">
    <property type="entry name" value="NDVA"/>
    <property type="match status" value="1"/>
</dbReference>
<accession>Q8YH20</accession>
<comment type="function">
    <text evidence="1">Involved in beta-(1--&gt;2)glucan export. Transmembrane domains (TMD) form a pore in the inner membrane and the ATP-binding domain (NBD) is responsible for energy generation (By similarity).</text>
</comment>
<comment type="catalytic activity">
    <reaction evidence="2">
        <text>[(1-&gt;2)-beta-D-glucosyl](n)(in) + ATP + H2O = [(1-&gt;2)-beta-D-glucosyl](n)(out) + ADP + phosphate + H(+)</text>
        <dbReference type="Rhea" id="RHEA:18453"/>
        <dbReference type="Rhea" id="RHEA-COMP:11881"/>
        <dbReference type="ChEBI" id="CHEBI:15377"/>
        <dbReference type="ChEBI" id="CHEBI:15378"/>
        <dbReference type="ChEBI" id="CHEBI:27517"/>
        <dbReference type="ChEBI" id="CHEBI:30616"/>
        <dbReference type="ChEBI" id="CHEBI:43474"/>
        <dbReference type="ChEBI" id="CHEBI:456216"/>
        <dbReference type="EC" id="7.5.2.3"/>
    </reaction>
</comment>
<comment type="subunit">
    <text evidence="2">Homodimer.</text>
</comment>
<comment type="subcellular location">
    <subcellularLocation>
        <location evidence="2">Cell inner membrane</location>
        <topology evidence="2">Multi-pass membrane protein</topology>
    </subcellularLocation>
</comment>
<comment type="domain">
    <text>In NdvA the ATP-binding domain (NBD) and the transmembrane domain (TMD) are fused.</text>
</comment>
<comment type="similarity">
    <text evidence="2">Belongs to the ABC transporter superfamily. Beta-(1--&gt;2)glucan exporter (TC 3.A.1.108.1) family.</text>
</comment>
<gene>
    <name evidence="2" type="primary">ndvA</name>
    <name type="ordered locus">BMEI0984</name>
</gene>
<proteinExistence type="inferred from homology"/>
<reference key="1">
    <citation type="journal article" date="2002" name="Proc. Natl. Acad. Sci. U.S.A.">
        <title>The genome sequence of the facultative intracellular pathogen Brucella melitensis.</title>
        <authorList>
            <person name="DelVecchio V.G."/>
            <person name="Kapatral V."/>
            <person name="Redkar R.J."/>
            <person name="Patra G."/>
            <person name="Mujer C."/>
            <person name="Los T."/>
            <person name="Ivanova N."/>
            <person name="Anderson I."/>
            <person name="Bhattacharyya A."/>
            <person name="Lykidis A."/>
            <person name="Reznik G."/>
            <person name="Jablonski L."/>
            <person name="Larsen N."/>
            <person name="D'Souza M."/>
            <person name="Bernal A."/>
            <person name="Mazur M."/>
            <person name="Goltsman E."/>
            <person name="Selkov E."/>
            <person name="Elzer P.H."/>
            <person name="Hagius S."/>
            <person name="O'Callaghan D."/>
            <person name="Letesson J.-J."/>
            <person name="Haselkorn R."/>
            <person name="Kyrpides N.C."/>
            <person name="Overbeek R."/>
        </authorList>
    </citation>
    <scope>NUCLEOTIDE SEQUENCE [LARGE SCALE GENOMIC DNA]</scope>
    <source>
        <strain>ATCC 23456 / CCUG 17765 / NCTC 10094 / 16M</strain>
    </source>
</reference>
<feature type="chain" id="PRO_0000290246" description="Beta-(1--&gt;2)glucan export ATP-binding/permease protein NdvA">
    <location>
        <begin position="1"/>
        <end position="599"/>
    </location>
</feature>
<feature type="transmembrane region" description="Helical" evidence="2">
    <location>
        <begin position="22"/>
        <end position="42"/>
    </location>
</feature>
<feature type="transmembrane region" description="Helical" evidence="2">
    <location>
        <begin position="55"/>
        <end position="75"/>
    </location>
</feature>
<feature type="transmembrane region" description="Helical" evidence="2">
    <location>
        <begin position="156"/>
        <end position="176"/>
    </location>
</feature>
<feature type="transmembrane region" description="Helical" evidence="2">
    <location>
        <begin position="248"/>
        <end position="268"/>
    </location>
</feature>
<feature type="transmembrane region" description="Helical" evidence="2">
    <location>
        <begin position="276"/>
        <end position="296"/>
    </location>
</feature>
<feature type="domain" description="ABC transmembrane type-1" evidence="2">
    <location>
        <begin position="21"/>
        <end position="301"/>
    </location>
</feature>
<feature type="domain" description="ABC transporter" evidence="2">
    <location>
        <begin position="335"/>
        <end position="569"/>
    </location>
</feature>
<feature type="binding site" evidence="2">
    <location>
        <begin position="368"/>
        <end position="375"/>
    </location>
    <ligand>
        <name>ATP</name>
        <dbReference type="ChEBI" id="CHEBI:30616"/>
    </ligand>
</feature>